<reference key="1">
    <citation type="submission" date="2007-03" db="EMBL/GenBank/DDBJ databases">
        <title>Complete sequence of Shewanella loihica PV-4.</title>
        <authorList>
            <consortium name="US DOE Joint Genome Institute"/>
            <person name="Copeland A."/>
            <person name="Lucas S."/>
            <person name="Lapidus A."/>
            <person name="Barry K."/>
            <person name="Detter J.C."/>
            <person name="Glavina del Rio T."/>
            <person name="Hammon N."/>
            <person name="Israni S."/>
            <person name="Dalin E."/>
            <person name="Tice H."/>
            <person name="Pitluck S."/>
            <person name="Chain P."/>
            <person name="Malfatti S."/>
            <person name="Shin M."/>
            <person name="Vergez L."/>
            <person name="Schmutz J."/>
            <person name="Larimer F."/>
            <person name="Land M."/>
            <person name="Hauser L."/>
            <person name="Kyrpides N."/>
            <person name="Mikhailova N."/>
            <person name="Romine M.F."/>
            <person name="Serres G."/>
            <person name="Fredrickson J."/>
            <person name="Tiedje J."/>
            <person name="Richardson P."/>
        </authorList>
    </citation>
    <scope>NUCLEOTIDE SEQUENCE [LARGE SCALE GENOMIC DNA]</scope>
    <source>
        <strain>ATCC BAA-1088 / PV-4</strain>
    </source>
</reference>
<name>GSA_SHELP</name>
<protein>
    <recommendedName>
        <fullName evidence="1">Glutamate-1-semialdehyde 2,1-aminomutase</fullName>
        <shortName evidence="1">GSA</shortName>
        <ecNumber evidence="1">5.4.3.8</ecNumber>
    </recommendedName>
    <alternativeName>
        <fullName evidence="1">Glutamate-1-semialdehyde aminotransferase</fullName>
        <shortName evidence="1">GSA-AT</shortName>
    </alternativeName>
</protein>
<keyword id="KW-0963">Cytoplasm</keyword>
<keyword id="KW-0413">Isomerase</keyword>
<keyword id="KW-0627">Porphyrin biosynthesis</keyword>
<keyword id="KW-0663">Pyridoxal phosphate</keyword>
<keyword id="KW-1185">Reference proteome</keyword>
<feature type="chain" id="PRO_0000300947" description="Glutamate-1-semialdehyde 2,1-aminomutase">
    <location>
        <begin position="1"/>
        <end position="428"/>
    </location>
</feature>
<feature type="modified residue" description="N6-(pyridoxal phosphate)lysine" evidence="1">
    <location>
        <position position="265"/>
    </location>
</feature>
<accession>A3QBN5</accession>
<comment type="catalytic activity">
    <reaction evidence="1">
        <text>(S)-4-amino-5-oxopentanoate = 5-aminolevulinate</text>
        <dbReference type="Rhea" id="RHEA:14265"/>
        <dbReference type="ChEBI" id="CHEBI:57501"/>
        <dbReference type="ChEBI" id="CHEBI:356416"/>
        <dbReference type="EC" id="5.4.3.8"/>
    </reaction>
</comment>
<comment type="cofactor">
    <cofactor evidence="1">
        <name>pyridoxal 5'-phosphate</name>
        <dbReference type="ChEBI" id="CHEBI:597326"/>
    </cofactor>
</comment>
<comment type="pathway">
    <text evidence="1">Porphyrin-containing compound metabolism; protoporphyrin-IX biosynthesis; 5-aminolevulinate from L-glutamyl-tRNA(Glu): step 2/2.</text>
</comment>
<comment type="subunit">
    <text evidence="1">Homodimer.</text>
</comment>
<comment type="subcellular location">
    <subcellularLocation>
        <location evidence="1">Cytoplasm</location>
    </subcellularLocation>
</comment>
<comment type="similarity">
    <text evidence="1">Belongs to the class-III pyridoxal-phosphate-dependent aminotransferase family. HemL subfamily.</text>
</comment>
<sequence length="428" mass="46071">MTRSETLFEQAKKTIPGGVNSPVRAFNGVGGSPRFIEKADGAYIYDADGKAYIDYVGSWGPMILGHNHPKIRQAVLDAVENGLSFGAPTELEVRMAEKVIEMVPSMEQVRMVSSGTEATMSAIRLARGFTNRDKILKFEGCYHGHADCLLVKAGSGALTLGQPSSPGIPEDFAKHTLTAVYNELESVKTLFEQYPEEIACIILEPVAGNMNCIPPIPGFLEGLRALCDQYGALLIIDEVMTGFRVSKSGAQGHYGITPDLTTLGKVIGGGMPVGAFGGRKEVMQFIAPTGPVYQAGTLSGNPIAMSAGLAQMEELCAEGLYEELAAKTKRIAEGFKAAANKHGIPLSINYVGGMFGFFFTELEQVTRFDQVTQCDAEAFRTFYHGMLDEGVYLAPSAYEAGFLSMAHGEKELEETLAAADRVFARMAK</sequence>
<dbReference type="EC" id="5.4.3.8" evidence="1"/>
<dbReference type="EMBL" id="CP000606">
    <property type="protein sequence ID" value="ABO22883.1"/>
    <property type="molecule type" value="Genomic_DNA"/>
</dbReference>
<dbReference type="RefSeq" id="WP_011864816.1">
    <property type="nucleotide sequence ID" value="NC_009092.1"/>
</dbReference>
<dbReference type="SMR" id="A3QBN5"/>
<dbReference type="STRING" id="323850.Shew_1012"/>
<dbReference type="KEGG" id="slo:Shew_1012"/>
<dbReference type="eggNOG" id="COG0001">
    <property type="taxonomic scope" value="Bacteria"/>
</dbReference>
<dbReference type="HOGENOM" id="CLU_016922_1_5_6"/>
<dbReference type="OrthoDB" id="9801052at2"/>
<dbReference type="UniPathway" id="UPA00251">
    <property type="reaction ID" value="UER00317"/>
</dbReference>
<dbReference type="Proteomes" id="UP000001558">
    <property type="component" value="Chromosome"/>
</dbReference>
<dbReference type="GO" id="GO:0005737">
    <property type="term" value="C:cytoplasm"/>
    <property type="evidence" value="ECO:0007669"/>
    <property type="project" value="UniProtKB-SubCell"/>
</dbReference>
<dbReference type="GO" id="GO:0042286">
    <property type="term" value="F:glutamate-1-semialdehyde 2,1-aminomutase activity"/>
    <property type="evidence" value="ECO:0007669"/>
    <property type="project" value="UniProtKB-UniRule"/>
</dbReference>
<dbReference type="GO" id="GO:0030170">
    <property type="term" value="F:pyridoxal phosphate binding"/>
    <property type="evidence" value="ECO:0007669"/>
    <property type="project" value="InterPro"/>
</dbReference>
<dbReference type="GO" id="GO:0008483">
    <property type="term" value="F:transaminase activity"/>
    <property type="evidence" value="ECO:0007669"/>
    <property type="project" value="InterPro"/>
</dbReference>
<dbReference type="GO" id="GO:0006782">
    <property type="term" value="P:protoporphyrinogen IX biosynthetic process"/>
    <property type="evidence" value="ECO:0007669"/>
    <property type="project" value="UniProtKB-UniRule"/>
</dbReference>
<dbReference type="CDD" id="cd00610">
    <property type="entry name" value="OAT_like"/>
    <property type="match status" value="1"/>
</dbReference>
<dbReference type="FunFam" id="3.40.640.10:FF:000021">
    <property type="entry name" value="Glutamate-1-semialdehyde 2,1-aminomutase"/>
    <property type="match status" value="1"/>
</dbReference>
<dbReference type="Gene3D" id="3.90.1150.10">
    <property type="entry name" value="Aspartate Aminotransferase, domain 1"/>
    <property type="match status" value="1"/>
</dbReference>
<dbReference type="Gene3D" id="3.40.640.10">
    <property type="entry name" value="Type I PLP-dependent aspartate aminotransferase-like (Major domain)"/>
    <property type="match status" value="1"/>
</dbReference>
<dbReference type="HAMAP" id="MF_00375">
    <property type="entry name" value="HemL_aminotrans_3"/>
    <property type="match status" value="1"/>
</dbReference>
<dbReference type="InterPro" id="IPR004639">
    <property type="entry name" value="4pyrrol_synth_GluAld_NH2Trfase"/>
</dbReference>
<dbReference type="InterPro" id="IPR005814">
    <property type="entry name" value="Aminotrans_3"/>
</dbReference>
<dbReference type="InterPro" id="IPR049704">
    <property type="entry name" value="Aminotrans_3_PPA_site"/>
</dbReference>
<dbReference type="InterPro" id="IPR015424">
    <property type="entry name" value="PyrdxlP-dep_Trfase"/>
</dbReference>
<dbReference type="InterPro" id="IPR015421">
    <property type="entry name" value="PyrdxlP-dep_Trfase_major"/>
</dbReference>
<dbReference type="InterPro" id="IPR015422">
    <property type="entry name" value="PyrdxlP-dep_Trfase_small"/>
</dbReference>
<dbReference type="NCBIfam" id="TIGR00713">
    <property type="entry name" value="hemL"/>
    <property type="match status" value="1"/>
</dbReference>
<dbReference type="NCBIfam" id="NF000818">
    <property type="entry name" value="PRK00062.1"/>
    <property type="match status" value="1"/>
</dbReference>
<dbReference type="PANTHER" id="PTHR43713">
    <property type="entry name" value="GLUTAMATE-1-SEMIALDEHYDE 2,1-AMINOMUTASE"/>
    <property type="match status" value="1"/>
</dbReference>
<dbReference type="PANTHER" id="PTHR43713:SF3">
    <property type="entry name" value="GLUTAMATE-1-SEMIALDEHYDE 2,1-AMINOMUTASE 1, CHLOROPLASTIC-RELATED"/>
    <property type="match status" value="1"/>
</dbReference>
<dbReference type="Pfam" id="PF00202">
    <property type="entry name" value="Aminotran_3"/>
    <property type="match status" value="1"/>
</dbReference>
<dbReference type="SUPFAM" id="SSF53383">
    <property type="entry name" value="PLP-dependent transferases"/>
    <property type="match status" value="1"/>
</dbReference>
<dbReference type="PROSITE" id="PS00600">
    <property type="entry name" value="AA_TRANSFER_CLASS_3"/>
    <property type="match status" value="1"/>
</dbReference>
<gene>
    <name evidence="1" type="primary">hemL</name>
    <name type="ordered locus">Shew_1012</name>
</gene>
<evidence type="ECO:0000255" key="1">
    <source>
        <dbReference type="HAMAP-Rule" id="MF_00375"/>
    </source>
</evidence>
<proteinExistence type="inferred from homology"/>
<organism>
    <name type="scientific">Shewanella loihica (strain ATCC BAA-1088 / PV-4)</name>
    <dbReference type="NCBI Taxonomy" id="323850"/>
    <lineage>
        <taxon>Bacteria</taxon>
        <taxon>Pseudomonadati</taxon>
        <taxon>Pseudomonadota</taxon>
        <taxon>Gammaproteobacteria</taxon>
        <taxon>Alteromonadales</taxon>
        <taxon>Shewanellaceae</taxon>
        <taxon>Shewanella</taxon>
    </lineage>
</organism>